<organism>
    <name type="scientific">Bordetella parapertussis (strain 12822 / ATCC BAA-587 / NCTC 13253)</name>
    <dbReference type="NCBI Taxonomy" id="257311"/>
    <lineage>
        <taxon>Bacteria</taxon>
        <taxon>Pseudomonadati</taxon>
        <taxon>Pseudomonadota</taxon>
        <taxon>Betaproteobacteria</taxon>
        <taxon>Burkholderiales</taxon>
        <taxon>Alcaligenaceae</taxon>
        <taxon>Bordetella</taxon>
    </lineage>
</organism>
<feature type="chain" id="PRO_0000176241" description="Elongation factor 4">
    <location>
        <begin position="1"/>
        <end position="597"/>
    </location>
</feature>
<feature type="domain" description="tr-type G">
    <location>
        <begin position="2"/>
        <end position="184"/>
    </location>
</feature>
<feature type="binding site" evidence="1">
    <location>
        <begin position="14"/>
        <end position="19"/>
    </location>
    <ligand>
        <name>GTP</name>
        <dbReference type="ChEBI" id="CHEBI:37565"/>
    </ligand>
</feature>
<feature type="binding site" evidence="1">
    <location>
        <begin position="131"/>
        <end position="134"/>
    </location>
    <ligand>
        <name>GTP</name>
        <dbReference type="ChEBI" id="CHEBI:37565"/>
    </ligand>
</feature>
<evidence type="ECO:0000255" key="1">
    <source>
        <dbReference type="HAMAP-Rule" id="MF_00071"/>
    </source>
</evidence>
<name>LEPA_BORPA</name>
<protein>
    <recommendedName>
        <fullName evidence="1">Elongation factor 4</fullName>
        <shortName evidence="1">EF-4</shortName>
        <ecNumber evidence="1">3.6.5.n1</ecNumber>
    </recommendedName>
    <alternativeName>
        <fullName evidence="1">Ribosomal back-translocase LepA</fullName>
    </alternativeName>
</protein>
<dbReference type="EC" id="3.6.5.n1" evidence="1"/>
<dbReference type="EMBL" id="BX640433">
    <property type="protein sequence ID" value="CAE38582.1"/>
    <property type="molecule type" value="Genomic_DNA"/>
</dbReference>
<dbReference type="RefSeq" id="WP_003813789.1">
    <property type="nucleotide sequence ID" value="NC_002928.3"/>
</dbReference>
<dbReference type="SMR" id="Q7W5J4"/>
<dbReference type="GeneID" id="93205079"/>
<dbReference type="KEGG" id="bpa:BPP3297"/>
<dbReference type="HOGENOM" id="CLU_009995_3_3_4"/>
<dbReference type="Proteomes" id="UP000001421">
    <property type="component" value="Chromosome"/>
</dbReference>
<dbReference type="GO" id="GO:0005886">
    <property type="term" value="C:plasma membrane"/>
    <property type="evidence" value="ECO:0007669"/>
    <property type="project" value="UniProtKB-SubCell"/>
</dbReference>
<dbReference type="GO" id="GO:0005525">
    <property type="term" value="F:GTP binding"/>
    <property type="evidence" value="ECO:0007669"/>
    <property type="project" value="UniProtKB-UniRule"/>
</dbReference>
<dbReference type="GO" id="GO:0003924">
    <property type="term" value="F:GTPase activity"/>
    <property type="evidence" value="ECO:0007669"/>
    <property type="project" value="UniProtKB-UniRule"/>
</dbReference>
<dbReference type="GO" id="GO:0097216">
    <property type="term" value="F:guanosine tetraphosphate binding"/>
    <property type="evidence" value="ECO:0007669"/>
    <property type="project" value="UniProtKB-ARBA"/>
</dbReference>
<dbReference type="GO" id="GO:0043022">
    <property type="term" value="F:ribosome binding"/>
    <property type="evidence" value="ECO:0007669"/>
    <property type="project" value="UniProtKB-UniRule"/>
</dbReference>
<dbReference type="GO" id="GO:0003746">
    <property type="term" value="F:translation elongation factor activity"/>
    <property type="evidence" value="ECO:0007669"/>
    <property type="project" value="UniProtKB-UniRule"/>
</dbReference>
<dbReference type="GO" id="GO:0045727">
    <property type="term" value="P:positive regulation of translation"/>
    <property type="evidence" value="ECO:0007669"/>
    <property type="project" value="UniProtKB-UniRule"/>
</dbReference>
<dbReference type="CDD" id="cd03699">
    <property type="entry name" value="EF4_II"/>
    <property type="match status" value="1"/>
</dbReference>
<dbReference type="CDD" id="cd16260">
    <property type="entry name" value="EF4_III"/>
    <property type="match status" value="1"/>
</dbReference>
<dbReference type="CDD" id="cd01890">
    <property type="entry name" value="LepA"/>
    <property type="match status" value="1"/>
</dbReference>
<dbReference type="CDD" id="cd03709">
    <property type="entry name" value="lepA_C"/>
    <property type="match status" value="1"/>
</dbReference>
<dbReference type="FunFam" id="3.40.50.300:FF:000078">
    <property type="entry name" value="Elongation factor 4"/>
    <property type="match status" value="1"/>
</dbReference>
<dbReference type="FunFam" id="2.40.30.10:FF:000015">
    <property type="entry name" value="Translation factor GUF1, mitochondrial"/>
    <property type="match status" value="1"/>
</dbReference>
<dbReference type="FunFam" id="3.30.70.240:FF:000007">
    <property type="entry name" value="Translation factor GUF1, mitochondrial"/>
    <property type="match status" value="1"/>
</dbReference>
<dbReference type="FunFam" id="3.30.70.2570:FF:000001">
    <property type="entry name" value="Translation factor GUF1, mitochondrial"/>
    <property type="match status" value="1"/>
</dbReference>
<dbReference type="FunFam" id="3.30.70.870:FF:000004">
    <property type="entry name" value="Translation factor GUF1, mitochondrial"/>
    <property type="match status" value="1"/>
</dbReference>
<dbReference type="Gene3D" id="3.30.70.240">
    <property type="match status" value="1"/>
</dbReference>
<dbReference type="Gene3D" id="3.30.70.2570">
    <property type="entry name" value="Elongation factor 4, C-terminal domain"/>
    <property type="match status" value="1"/>
</dbReference>
<dbReference type="Gene3D" id="3.30.70.870">
    <property type="entry name" value="Elongation Factor G (Translational Gtpase), domain 3"/>
    <property type="match status" value="1"/>
</dbReference>
<dbReference type="Gene3D" id="3.40.50.300">
    <property type="entry name" value="P-loop containing nucleotide triphosphate hydrolases"/>
    <property type="match status" value="1"/>
</dbReference>
<dbReference type="Gene3D" id="2.40.30.10">
    <property type="entry name" value="Translation factors"/>
    <property type="match status" value="1"/>
</dbReference>
<dbReference type="HAMAP" id="MF_00071">
    <property type="entry name" value="LepA"/>
    <property type="match status" value="1"/>
</dbReference>
<dbReference type="InterPro" id="IPR006297">
    <property type="entry name" value="EF-4"/>
</dbReference>
<dbReference type="InterPro" id="IPR035647">
    <property type="entry name" value="EFG_III/V"/>
</dbReference>
<dbReference type="InterPro" id="IPR000640">
    <property type="entry name" value="EFG_V-like"/>
</dbReference>
<dbReference type="InterPro" id="IPR004161">
    <property type="entry name" value="EFTu-like_2"/>
</dbReference>
<dbReference type="InterPro" id="IPR031157">
    <property type="entry name" value="G_TR_CS"/>
</dbReference>
<dbReference type="InterPro" id="IPR038363">
    <property type="entry name" value="LepA_C_sf"/>
</dbReference>
<dbReference type="InterPro" id="IPR013842">
    <property type="entry name" value="LepA_CTD"/>
</dbReference>
<dbReference type="InterPro" id="IPR035654">
    <property type="entry name" value="LepA_IV"/>
</dbReference>
<dbReference type="InterPro" id="IPR027417">
    <property type="entry name" value="P-loop_NTPase"/>
</dbReference>
<dbReference type="InterPro" id="IPR005225">
    <property type="entry name" value="Small_GTP-bd"/>
</dbReference>
<dbReference type="InterPro" id="IPR000795">
    <property type="entry name" value="T_Tr_GTP-bd_dom"/>
</dbReference>
<dbReference type="InterPro" id="IPR009000">
    <property type="entry name" value="Transl_B-barrel_sf"/>
</dbReference>
<dbReference type="NCBIfam" id="TIGR01393">
    <property type="entry name" value="lepA"/>
    <property type="match status" value="1"/>
</dbReference>
<dbReference type="NCBIfam" id="TIGR00231">
    <property type="entry name" value="small_GTP"/>
    <property type="match status" value="1"/>
</dbReference>
<dbReference type="PANTHER" id="PTHR43512:SF4">
    <property type="entry name" value="TRANSLATION FACTOR GUF1 HOMOLOG, CHLOROPLASTIC"/>
    <property type="match status" value="1"/>
</dbReference>
<dbReference type="PANTHER" id="PTHR43512">
    <property type="entry name" value="TRANSLATION FACTOR GUF1-RELATED"/>
    <property type="match status" value="1"/>
</dbReference>
<dbReference type="Pfam" id="PF00679">
    <property type="entry name" value="EFG_C"/>
    <property type="match status" value="1"/>
</dbReference>
<dbReference type="Pfam" id="PF00009">
    <property type="entry name" value="GTP_EFTU"/>
    <property type="match status" value="1"/>
</dbReference>
<dbReference type="Pfam" id="PF03144">
    <property type="entry name" value="GTP_EFTU_D2"/>
    <property type="match status" value="1"/>
</dbReference>
<dbReference type="Pfam" id="PF06421">
    <property type="entry name" value="LepA_C"/>
    <property type="match status" value="1"/>
</dbReference>
<dbReference type="PRINTS" id="PR00315">
    <property type="entry name" value="ELONGATNFCT"/>
</dbReference>
<dbReference type="SMART" id="SM00838">
    <property type="entry name" value="EFG_C"/>
    <property type="match status" value="1"/>
</dbReference>
<dbReference type="SUPFAM" id="SSF54980">
    <property type="entry name" value="EF-G C-terminal domain-like"/>
    <property type="match status" value="2"/>
</dbReference>
<dbReference type="SUPFAM" id="SSF52540">
    <property type="entry name" value="P-loop containing nucleoside triphosphate hydrolases"/>
    <property type="match status" value="1"/>
</dbReference>
<dbReference type="SUPFAM" id="SSF50447">
    <property type="entry name" value="Translation proteins"/>
    <property type="match status" value="1"/>
</dbReference>
<dbReference type="PROSITE" id="PS00301">
    <property type="entry name" value="G_TR_1"/>
    <property type="match status" value="1"/>
</dbReference>
<dbReference type="PROSITE" id="PS51722">
    <property type="entry name" value="G_TR_2"/>
    <property type="match status" value="1"/>
</dbReference>
<comment type="function">
    <text evidence="1">Required for accurate and efficient protein synthesis under certain stress conditions. May act as a fidelity factor of the translation reaction, by catalyzing a one-codon backward translocation of tRNAs on improperly translocated ribosomes. Back-translocation proceeds from a post-translocation (POST) complex to a pre-translocation (PRE) complex, thus giving elongation factor G a second chance to translocate the tRNAs correctly. Binds to ribosomes in a GTP-dependent manner.</text>
</comment>
<comment type="catalytic activity">
    <reaction evidence="1">
        <text>GTP + H2O = GDP + phosphate + H(+)</text>
        <dbReference type="Rhea" id="RHEA:19669"/>
        <dbReference type="ChEBI" id="CHEBI:15377"/>
        <dbReference type="ChEBI" id="CHEBI:15378"/>
        <dbReference type="ChEBI" id="CHEBI:37565"/>
        <dbReference type="ChEBI" id="CHEBI:43474"/>
        <dbReference type="ChEBI" id="CHEBI:58189"/>
        <dbReference type="EC" id="3.6.5.n1"/>
    </reaction>
</comment>
<comment type="subcellular location">
    <subcellularLocation>
        <location evidence="1">Cell inner membrane</location>
        <topology evidence="1">Peripheral membrane protein</topology>
        <orientation evidence="1">Cytoplasmic side</orientation>
    </subcellularLocation>
</comment>
<comment type="similarity">
    <text evidence="1">Belongs to the TRAFAC class translation factor GTPase superfamily. Classic translation factor GTPase family. LepA subfamily.</text>
</comment>
<proteinExistence type="inferred from homology"/>
<keyword id="KW-0997">Cell inner membrane</keyword>
<keyword id="KW-1003">Cell membrane</keyword>
<keyword id="KW-0342">GTP-binding</keyword>
<keyword id="KW-0378">Hydrolase</keyword>
<keyword id="KW-0472">Membrane</keyword>
<keyword id="KW-0547">Nucleotide-binding</keyword>
<keyword id="KW-0648">Protein biosynthesis</keyword>
<gene>
    <name evidence="1" type="primary">lepA</name>
    <name type="ordered locus">BPP3297</name>
</gene>
<reference key="1">
    <citation type="journal article" date="2003" name="Nat. Genet.">
        <title>Comparative analysis of the genome sequences of Bordetella pertussis, Bordetella parapertussis and Bordetella bronchiseptica.</title>
        <authorList>
            <person name="Parkhill J."/>
            <person name="Sebaihia M."/>
            <person name="Preston A."/>
            <person name="Murphy L.D."/>
            <person name="Thomson N.R."/>
            <person name="Harris D.E."/>
            <person name="Holden M.T.G."/>
            <person name="Churcher C.M."/>
            <person name="Bentley S.D."/>
            <person name="Mungall K.L."/>
            <person name="Cerdeno-Tarraga A.-M."/>
            <person name="Temple L."/>
            <person name="James K.D."/>
            <person name="Harris B."/>
            <person name="Quail M.A."/>
            <person name="Achtman M."/>
            <person name="Atkin R."/>
            <person name="Baker S."/>
            <person name="Basham D."/>
            <person name="Bason N."/>
            <person name="Cherevach I."/>
            <person name="Chillingworth T."/>
            <person name="Collins M."/>
            <person name="Cronin A."/>
            <person name="Davis P."/>
            <person name="Doggett J."/>
            <person name="Feltwell T."/>
            <person name="Goble A."/>
            <person name="Hamlin N."/>
            <person name="Hauser H."/>
            <person name="Holroyd S."/>
            <person name="Jagels K."/>
            <person name="Leather S."/>
            <person name="Moule S."/>
            <person name="Norberczak H."/>
            <person name="O'Neil S."/>
            <person name="Ormond D."/>
            <person name="Price C."/>
            <person name="Rabbinowitsch E."/>
            <person name="Rutter S."/>
            <person name="Sanders M."/>
            <person name="Saunders D."/>
            <person name="Seeger K."/>
            <person name="Sharp S."/>
            <person name="Simmonds M."/>
            <person name="Skelton J."/>
            <person name="Squares R."/>
            <person name="Squares S."/>
            <person name="Stevens K."/>
            <person name="Unwin L."/>
            <person name="Whitehead S."/>
            <person name="Barrell B.G."/>
            <person name="Maskell D.J."/>
        </authorList>
    </citation>
    <scope>NUCLEOTIDE SEQUENCE [LARGE SCALE GENOMIC DNA]</scope>
    <source>
        <strain>12822 / ATCC BAA-587 / NCTC 13253</strain>
    </source>
</reference>
<sequence length="597" mass="65965">MQHIRNFSIIAHIDHGKSTLADRLIHRCGGLAEREMSAQVLDSMDIERERGITIKAQTASLQYKSQDGTVYNLNLIDTPGHVDFSYEVSRSLSACEGALLVVDASQGVEAQTVANCYTAIELGVEVLPVLNKMDLPQADPEAARQEVEDVIGIDASEAVLASAKTGMGIDEILESIVARVPPPKGDPSAPLQALIIDSWFDNYVGVVMLVRIVNGVLKPKDKILLMASHATHLCEQIGVFTPKSQPRPELSAGEVGFVIAGIKELEHAKVGDTITLAGKPAAEPLPGFKEVKPQVFAGLYPVESSEYDQLRDSLEKLKLNDAALMFEPEVSQALGFGFRCGFLGLLHMEIVQERLEREFDMDIITTAPSVVYEVEQRDGTVVTIESPSRMPEIAKIADIREPIVKVTLFMPQEYVGPVMTLCNNKRGVQLNMSYHGRQVHLTYEIPLAEIVLDFFDKLKSVSRGYASMDYEFVEYRSADVVKVDLLINGDRVDALAMIAHRNNARYRAREVVSRMRGLIPRQMFDVAIQAAIGAEVIARENVKALRKNVLAKCYGGDISRKKKLLEKQKAGKKRMKQVGSVEIPQEAFLAILQVEDK</sequence>
<accession>Q7W5J4</accession>